<gene>
    <name evidence="1" type="primary">rsmH</name>
    <name type="synonym">mraW</name>
    <name type="ordered locus">Shewmr7_0378</name>
</gene>
<keyword id="KW-0963">Cytoplasm</keyword>
<keyword id="KW-0489">Methyltransferase</keyword>
<keyword id="KW-0698">rRNA processing</keyword>
<keyword id="KW-0949">S-adenosyl-L-methionine</keyword>
<keyword id="KW-0808">Transferase</keyword>
<name>RSMH_SHESR</name>
<dbReference type="EC" id="2.1.1.199" evidence="1"/>
<dbReference type="EMBL" id="CP000444">
    <property type="protein sequence ID" value="ABI41381.1"/>
    <property type="molecule type" value="Genomic_DNA"/>
</dbReference>
<dbReference type="SMR" id="Q0HZS4"/>
<dbReference type="KEGG" id="shm:Shewmr7_0378"/>
<dbReference type="HOGENOM" id="CLU_038422_2_0_6"/>
<dbReference type="GO" id="GO:0005737">
    <property type="term" value="C:cytoplasm"/>
    <property type="evidence" value="ECO:0007669"/>
    <property type="project" value="UniProtKB-SubCell"/>
</dbReference>
<dbReference type="GO" id="GO:0071424">
    <property type="term" value="F:rRNA (cytosine-N4-)-methyltransferase activity"/>
    <property type="evidence" value="ECO:0007669"/>
    <property type="project" value="UniProtKB-UniRule"/>
</dbReference>
<dbReference type="GO" id="GO:0070475">
    <property type="term" value="P:rRNA base methylation"/>
    <property type="evidence" value="ECO:0007669"/>
    <property type="project" value="UniProtKB-UniRule"/>
</dbReference>
<dbReference type="FunFam" id="1.10.150.170:FF:000001">
    <property type="entry name" value="Ribosomal RNA small subunit methyltransferase H"/>
    <property type="match status" value="1"/>
</dbReference>
<dbReference type="Gene3D" id="1.10.150.170">
    <property type="entry name" value="Putative methyltransferase TM0872, insert domain"/>
    <property type="match status" value="1"/>
</dbReference>
<dbReference type="Gene3D" id="3.40.50.150">
    <property type="entry name" value="Vaccinia Virus protein VP39"/>
    <property type="match status" value="1"/>
</dbReference>
<dbReference type="HAMAP" id="MF_01007">
    <property type="entry name" value="16SrRNA_methyltr_H"/>
    <property type="match status" value="1"/>
</dbReference>
<dbReference type="InterPro" id="IPR002903">
    <property type="entry name" value="RsmH"/>
</dbReference>
<dbReference type="InterPro" id="IPR023397">
    <property type="entry name" value="SAM-dep_MeTrfase_MraW_recog"/>
</dbReference>
<dbReference type="InterPro" id="IPR029063">
    <property type="entry name" value="SAM-dependent_MTases_sf"/>
</dbReference>
<dbReference type="NCBIfam" id="TIGR00006">
    <property type="entry name" value="16S rRNA (cytosine(1402)-N(4))-methyltransferase RsmH"/>
    <property type="match status" value="1"/>
</dbReference>
<dbReference type="PANTHER" id="PTHR11265:SF0">
    <property type="entry name" value="12S RRNA N4-METHYLCYTIDINE METHYLTRANSFERASE"/>
    <property type="match status" value="1"/>
</dbReference>
<dbReference type="PANTHER" id="PTHR11265">
    <property type="entry name" value="S-ADENOSYL-METHYLTRANSFERASE MRAW"/>
    <property type="match status" value="1"/>
</dbReference>
<dbReference type="Pfam" id="PF01795">
    <property type="entry name" value="Methyltransf_5"/>
    <property type="match status" value="1"/>
</dbReference>
<dbReference type="PIRSF" id="PIRSF004486">
    <property type="entry name" value="MraW"/>
    <property type="match status" value="1"/>
</dbReference>
<dbReference type="SUPFAM" id="SSF81799">
    <property type="entry name" value="Putative methyltransferase TM0872, insert domain"/>
    <property type="match status" value="1"/>
</dbReference>
<dbReference type="SUPFAM" id="SSF53335">
    <property type="entry name" value="S-adenosyl-L-methionine-dependent methyltransferases"/>
    <property type="match status" value="1"/>
</dbReference>
<proteinExistence type="inferred from homology"/>
<feature type="chain" id="PRO_0000387124" description="Ribosomal RNA small subunit methyltransferase H">
    <location>
        <begin position="1"/>
        <end position="313"/>
    </location>
</feature>
<feature type="binding site" evidence="1">
    <location>
        <begin position="35"/>
        <end position="37"/>
    </location>
    <ligand>
        <name>S-adenosyl-L-methionine</name>
        <dbReference type="ChEBI" id="CHEBI:59789"/>
    </ligand>
</feature>
<feature type="binding site" evidence="1">
    <location>
        <position position="55"/>
    </location>
    <ligand>
        <name>S-adenosyl-L-methionine</name>
        <dbReference type="ChEBI" id="CHEBI:59789"/>
    </ligand>
</feature>
<feature type="binding site" evidence="1">
    <location>
        <position position="80"/>
    </location>
    <ligand>
        <name>S-adenosyl-L-methionine</name>
        <dbReference type="ChEBI" id="CHEBI:59789"/>
    </ligand>
</feature>
<feature type="binding site" evidence="1">
    <location>
        <position position="102"/>
    </location>
    <ligand>
        <name>S-adenosyl-L-methionine</name>
        <dbReference type="ChEBI" id="CHEBI:59789"/>
    </ligand>
</feature>
<feature type="binding site" evidence="1">
    <location>
        <position position="109"/>
    </location>
    <ligand>
        <name>S-adenosyl-L-methionine</name>
        <dbReference type="ChEBI" id="CHEBI:59789"/>
    </ligand>
</feature>
<organism>
    <name type="scientific">Shewanella sp. (strain MR-7)</name>
    <dbReference type="NCBI Taxonomy" id="60481"/>
    <lineage>
        <taxon>Bacteria</taxon>
        <taxon>Pseudomonadati</taxon>
        <taxon>Pseudomonadota</taxon>
        <taxon>Gammaproteobacteria</taxon>
        <taxon>Alteromonadales</taxon>
        <taxon>Shewanellaceae</taxon>
        <taxon>Shewanella</taxon>
    </lineage>
</organism>
<reference key="1">
    <citation type="submission" date="2006-08" db="EMBL/GenBank/DDBJ databases">
        <title>Complete sequence of chromosome 1 of Shewanella sp. MR-7.</title>
        <authorList>
            <person name="Copeland A."/>
            <person name="Lucas S."/>
            <person name="Lapidus A."/>
            <person name="Barry K."/>
            <person name="Detter J.C."/>
            <person name="Glavina del Rio T."/>
            <person name="Hammon N."/>
            <person name="Israni S."/>
            <person name="Dalin E."/>
            <person name="Tice H."/>
            <person name="Pitluck S."/>
            <person name="Kiss H."/>
            <person name="Brettin T."/>
            <person name="Bruce D."/>
            <person name="Han C."/>
            <person name="Tapia R."/>
            <person name="Gilna P."/>
            <person name="Schmutz J."/>
            <person name="Larimer F."/>
            <person name="Land M."/>
            <person name="Hauser L."/>
            <person name="Kyrpides N."/>
            <person name="Mikhailova N."/>
            <person name="Nealson K."/>
            <person name="Konstantinidis K."/>
            <person name="Klappenbach J."/>
            <person name="Tiedje J."/>
            <person name="Richardson P."/>
        </authorList>
    </citation>
    <scope>NUCLEOTIDE SEQUENCE [LARGE SCALE GENOMIC DNA]</scope>
    <source>
        <strain>MR-7</strain>
    </source>
</reference>
<sequence length="313" mass="35150">MSQEFAHLSVLLEETVGGLNIKDDGIYIDGTFGRGGHSRQILQRLGENGRLIAIDRDPQAIEAAKQFADDPRFQIVHGGFGQLADYVEELGLVGKIDGVLLDLGVSSPQLDDAERGFSFLRDGPLDMRMDNSQGETAAQWLARAEIEDMAWVFKTYGEEKNARHIARCIAADRDKTPFLRTKDLADLIARITKNKERNKHPATRVFQAIRIYINSELDQIDQALEGALTVLAPQGRLSIISFHSLEDRIVKRFIRRHSQGESVPHGLPITEDQINKSRKLRAIGKAIMPSDEEIERNARARSSVLRIAERLDY</sequence>
<accession>Q0HZS4</accession>
<evidence type="ECO:0000255" key="1">
    <source>
        <dbReference type="HAMAP-Rule" id="MF_01007"/>
    </source>
</evidence>
<protein>
    <recommendedName>
        <fullName evidence="1">Ribosomal RNA small subunit methyltransferase H</fullName>
        <ecNumber evidence="1">2.1.1.199</ecNumber>
    </recommendedName>
    <alternativeName>
        <fullName evidence="1">16S rRNA m(4)C1402 methyltransferase</fullName>
    </alternativeName>
    <alternativeName>
        <fullName evidence="1">rRNA (cytosine-N(4)-)-methyltransferase RsmH</fullName>
    </alternativeName>
</protein>
<comment type="function">
    <text evidence="1">Specifically methylates the N4 position of cytidine in position 1402 (C1402) of 16S rRNA.</text>
</comment>
<comment type="catalytic activity">
    <reaction evidence="1">
        <text>cytidine(1402) in 16S rRNA + S-adenosyl-L-methionine = N(4)-methylcytidine(1402) in 16S rRNA + S-adenosyl-L-homocysteine + H(+)</text>
        <dbReference type="Rhea" id="RHEA:42928"/>
        <dbReference type="Rhea" id="RHEA-COMP:10286"/>
        <dbReference type="Rhea" id="RHEA-COMP:10287"/>
        <dbReference type="ChEBI" id="CHEBI:15378"/>
        <dbReference type="ChEBI" id="CHEBI:57856"/>
        <dbReference type="ChEBI" id="CHEBI:59789"/>
        <dbReference type="ChEBI" id="CHEBI:74506"/>
        <dbReference type="ChEBI" id="CHEBI:82748"/>
        <dbReference type="EC" id="2.1.1.199"/>
    </reaction>
</comment>
<comment type="subcellular location">
    <subcellularLocation>
        <location evidence="1">Cytoplasm</location>
    </subcellularLocation>
</comment>
<comment type="similarity">
    <text evidence="1">Belongs to the methyltransferase superfamily. RsmH family.</text>
</comment>